<gene>
    <name evidence="1" type="primary">recO</name>
    <name type="ordered locus">YPN_1208</name>
    <name type="ORF">YP516_1321</name>
</gene>
<protein>
    <recommendedName>
        <fullName evidence="1">DNA repair protein RecO</fullName>
    </recommendedName>
    <alternativeName>
        <fullName evidence="1">Recombination protein O</fullName>
    </alternativeName>
</protein>
<keyword id="KW-0227">DNA damage</keyword>
<keyword id="KW-0233">DNA recombination</keyword>
<keyword id="KW-0234">DNA repair</keyword>
<reference key="1">
    <citation type="journal article" date="2006" name="J. Bacteriol.">
        <title>Complete genome sequence of Yersinia pestis strains Antiqua and Nepal516: evidence of gene reduction in an emerging pathogen.</title>
        <authorList>
            <person name="Chain P.S.G."/>
            <person name="Hu P."/>
            <person name="Malfatti S.A."/>
            <person name="Radnedge L."/>
            <person name="Larimer F."/>
            <person name="Vergez L.M."/>
            <person name="Worsham P."/>
            <person name="Chu M.C."/>
            <person name="Andersen G.L."/>
        </authorList>
    </citation>
    <scope>NUCLEOTIDE SEQUENCE [LARGE SCALE GENOMIC DNA]</scope>
    <source>
        <strain>Nepal516</strain>
    </source>
</reference>
<reference key="2">
    <citation type="submission" date="2009-04" db="EMBL/GenBank/DDBJ databases">
        <title>Yersinia pestis Nepal516A whole genome shotgun sequencing project.</title>
        <authorList>
            <person name="Plunkett G. III"/>
            <person name="Anderson B.D."/>
            <person name="Baumler D.J."/>
            <person name="Burland V."/>
            <person name="Cabot E.L."/>
            <person name="Glasner J.D."/>
            <person name="Mau B."/>
            <person name="Neeno-Eckwall E."/>
            <person name="Perna N.T."/>
            <person name="Munk A.C."/>
            <person name="Tapia R."/>
            <person name="Green L.D."/>
            <person name="Rogers Y.C."/>
            <person name="Detter J.C."/>
            <person name="Bruce D.C."/>
            <person name="Brettin T.S."/>
        </authorList>
    </citation>
    <scope>NUCLEOTIDE SEQUENCE [LARGE SCALE GENOMIC DNA]</scope>
    <source>
        <strain>Nepal516</strain>
    </source>
</reference>
<comment type="function">
    <text evidence="1">Involved in DNA repair and RecF pathway recombination.</text>
</comment>
<comment type="similarity">
    <text evidence="1">Belongs to the RecO family.</text>
</comment>
<proteinExistence type="inferred from homology"/>
<accession>Q1CKE2</accession>
<accession>C4GRF3</accession>
<organism>
    <name type="scientific">Yersinia pestis bv. Antiqua (strain Nepal516)</name>
    <dbReference type="NCBI Taxonomy" id="377628"/>
    <lineage>
        <taxon>Bacteria</taxon>
        <taxon>Pseudomonadati</taxon>
        <taxon>Pseudomonadota</taxon>
        <taxon>Gammaproteobacteria</taxon>
        <taxon>Enterobacterales</taxon>
        <taxon>Yersiniaceae</taxon>
        <taxon>Yersinia</taxon>
    </lineage>
</organism>
<name>RECO_YERPN</name>
<dbReference type="EMBL" id="CP000305">
    <property type="protein sequence ID" value="ABG17538.1"/>
    <property type="molecule type" value="Genomic_DNA"/>
</dbReference>
<dbReference type="EMBL" id="ACNQ01000008">
    <property type="protein sequence ID" value="EEO77644.1"/>
    <property type="molecule type" value="Genomic_DNA"/>
</dbReference>
<dbReference type="RefSeq" id="WP_002209680.1">
    <property type="nucleotide sequence ID" value="NZ_ACNQ01000008.1"/>
</dbReference>
<dbReference type="SMR" id="Q1CKE2"/>
<dbReference type="GeneID" id="57975971"/>
<dbReference type="KEGG" id="ypn:YPN_1208"/>
<dbReference type="HOGENOM" id="CLU_066645_1_0_6"/>
<dbReference type="Proteomes" id="UP000008936">
    <property type="component" value="Chromosome"/>
</dbReference>
<dbReference type="GO" id="GO:0043590">
    <property type="term" value="C:bacterial nucleoid"/>
    <property type="evidence" value="ECO:0007669"/>
    <property type="project" value="TreeGrafter"/>
</dbReference>
<dbReference type="GO" id="GO:0006310">
    <property type="term" value="P:DNA recombination"/>
    <property type="evidence" value="ECO:0007669"/>
    <property type="project" value="UniProtKB-UniRule"/>
</dbReference>
<dbReference type="GO" id="GO:0006302">
    <property type="term" value="P:double-strand break repair"/>
    <property type="evidence" value="ECO:0007669"/>
    <property type="project" value="TreeGrafter"/>
</dbReference>
<dbReference type="Gene3D" id="2.40.50.140">
    <property type="entry name" value="Nucleic acid-binding proteins"/>
    <property type="match status" value="1"/>
</dbReference>
<dbReference type="Gene3D" id="1.20.1440.120">
    <property type="entry name" value="Recombination protein O, C-terminal domain"/>
    <property type="match status" value="1"/>
</dbReference>
<dbReference type="HAMAP" id="MF_00201">
    <property type="entry name" value="RecO"/>
    <property type="match status" value="1"/>
</dbReference>
<dbReference type="InterPro" id="IPR037278">
    <property type="entry name" value="ARFGAP/RecO"/>
</dbReference>
<dbReference type="InterPro" id="IPR022572">
    <property type="entry name" value="DNA_rep/recomb_RecO_N"/>
</dbReference>
<dbReference type="InterPro" id="IPR012340">
    <property type="entry name" value="NA-bd_OB-fold"/>
</dbReference>
<dbReference type="InterPro" id="IPR003717">
    <property type="entry name" value="RecO"/>
</dbReference>
<dbReference type="InterPro" id="IPR042242">
    <property type="entry name" value="RecO_C"/>
</dbReference>
<dbReference type="NCBIfam" id="TIGR00613">
    <property type="entry name" value="reco"/>
    <property type="match status" value="1"/>
</dbReference>
<dbReference type="PANTHER" id="PTHR33991">
    <property type="entry name" value="DNA REPAIR PROTEIN RECO"/>
    <property type="match status" value="1"/>
</dbReference>
<dbReference type="PANTHER" id="PTHR33991:SF1">
    <property type="entry name" value="DNA REPAIR PROTEIN RECO"/>
    <property type="match status" value="1"/>
</dbReference>
<dbReference type="Pfam" id="PF02565">
    <property type="entry name" value="RecO_C"/>
    <property type="match status" value="1"/>
</dbReference>
<dbReference type="Pfam" id="PF11967">
    <property type="entry name" value="RecO_N"/>
    <property type="match status" value="1"/>
</dbReference>
<dbReference type="SUPFAM" id="SSF57863">
    <property type="entry name" value="ArfGap/RecO-like zinc finger"/>
    <property type="match status" value="1"/>
</dbReference>
<dbReference type="SUPFAM" id="SSF50249">
    <property type="entry name" value="Nucleic acid-binding proteins"/>
    <property type="match status" value="1"/>
</dbReference>
<sequence>MDGWQRAFVLHGRPYSETSLMLDLFTEGEGRMRVLAKGARGRRSNLKGCLQPFTPLLVRWSGRGEVKTLRSAEPVSLALPLSGSMLYSGLYVNELLSRVLEHQTSYSALFFDYLHCLQALAGSDGSPEHALRQFELAMLANLGYGVDFLHCAGSGQPVSDTMTYRYREEKGFIASLVVDHYSFTGRQLLALANREFPDADTLRAAKRFTRIALKPYLGGKPLKSRELFRQFVIKPPADPSP</sequence>
<feature type="chain" id="PRO_0000264858" description="DNA repair protein RecO">
    <location>
        <begin position="1"/>
        <end position="241"/>
    </location>
</feature>
<evidence type="ECO:0000255" key="1">
    <source>
        <dbReference type="HAMAP-Rule" id="MF_00201"/>
    </source>
</evidence>